<organism>
    <name type="scientific">Pyrococcus furiosus (strain ATCC 43587 / DSM 3638 / JCM 8422 / Vc1)</name>
    <dbReference type="NCBI Taxonomy" id="186497"/>
    <lineage>
        <taxon>Archaea</taxon>
        <taxon>Methanobacteriati</taxon>
        <taxon>Methanobacteriota</taxon>
        <taxon>Thermococci</taxon>
        <taxon>Thermococcales</taxon>
        <taxon>Thermococcaceae</taxon>
        <taxon>Pyrococcus</taxon>
    </lineage>
</organism>
<gene>
    <name type="ordered locus">PF0972</name>
</gene>
<protein>
    <recommendedName>
        <fullName evidence="1">Hydroxymethylglutaryl-CoA synthase</fullName>
        <shortName evidence="1">HMG-CoA synthase</shortName>
        <shortName evidence="1">HMGCS</shortName>
        <ecNumber evidence="1">2.3.3.10</ecNumber>
    </recommendedName>
</protein>
<evidence type="ECO:0000255" key="1">
    <source>
        <dbReference type="HAMAP-Rule" id="MF_01409"/>
    </source>
</evidence>
<name>HMGCS_PYRFU</name>
<comment type="function">
    <text evidence="1">Catalyzes the condensation of acetyl-CoA with acetoacetyl-CoA to form 3-hydroxy-3-methylglutaryl-CoA (HMG-CoA). Functions in the mevalonate (MVA) pathway leading to isopentenyl diphosphate (IPP), a key precursor for the biosynthesis of isoprenoid compounds that are building blocks of archaeal membrane lipids.</text>
</comment>
<comment type="catalytic activity">
    <reaction evidence="1">
        <text>acetoacetyl-CoA + acetyl-CoA + H2O = (3S)-3-hydroxy-3-methylglutaryl-CoA + CoA + H(+)</text>
        <dbReference type="Rhea" id="RHEA:10188"/>
        <dbReference type="ChEBI" id="CHEBI:15377"/>
        <dbReference type="ChEBI" id="CHEBI:15378"/>
        <dbReference type="ChEBI" id="CHEBI:43074"/>
        <dbReference type="ChEBI" id="CHEBI:57286"/>
        <dbReference type="ChEBI" id="CHEBI:57287"/>
        <dbReference type="ChEBI" id="CHEBI:57288"/>
        <dbReference type="EC" id="2.3.3.10"/>
    </reaction>
    <physiologicalReaction direction="left-to-right" evidence="1">
        <dbReference type="Rhea" id="RHEA:10189"/>
    </physiologicalReaction>
</comment>
<comment type="pathway">
    <text evidence="1">Metabolic intermediate biosynthesis; (R)-mevalonate biosynthesis; (R)-mevalonate from acetyl-CoA: step 2/3.</text>
</comment>
<comment type="subunit">
    <text evidence="1">Interacts with acetoacetyl-CoA thiolase that catalyzes the precedent step in the pathway and with a DUF35 protein. The acetoacetyl-CoA thiolase/HMG-CoA synthase complex channels the intermediate via a fused CoA-binding site, which allows for efficient coupling of the endergonic thiolase reaction with the exergonic HMGCS reaction.</text>
</comment>
<comment type="similarity">
    <text evidence="1">Belongs to the thiolase-like superfamily. Archaeal HMG-CoA synthase family.</text>
</comment>
<proteinExistence type="inferred from homology"/>
<sequence>MRKVMKPMKDVGIVGYGAYVPMYRIRNEEIGRVWGVSSFPIEEKAVPGLDEDAITIGIEAARNALKRAKIDPQKIRAIWFGTESKPYAVKPSATIIAEAIGATPDLEAADFEFACKAGTEALQAAIGFVGSGMAEYAMAIGADTAQGRPGDHLEFTAGAGGAAFIVGEKSNESVAYFEGSYSYVTDTPDFWRRQHEHYPRHGNRFTGEPAYFHHIINAAKTLMEELGLKPSDFDYAVFHQPNVKFPLTVAKILGIPKEKVLPGLLTGRIGNTYSGATMVGVSAVLDIAKPGDRILWVSFGSGAGSNAFSIVVQDAIEEKRDLAPKVEDYVKRRKVIDYALYAKARRKYIL</sequence>
<accession>Q51798</accession>
<keyword id="KW-0012">Acyltransferase</keyword>
<keyword id="KW-0414">Isoprene biosynthesis</keyword>
<keyword id="KW-1185">Reference proteome</keyword>
<keyword id="KW-0808">Transferase</keyword>
<reference key="1">
    <citation type="journal article" date="1996" name="J. Bacteriol.">
        <title>Molecular and phylogenetic characterization of pyruvate and 2-ketoisovalerate ferredoxin oxidoreductases from Pyrococcus furiosus and pyruvate ferredoxin oxidoreductase from Thermotoga maritima.</title>
        <authorList>
            <person name="Kletzin A."/>
            <person name="Adams M.W.W."/>
        </authorList>
    </citation>
    <scope>NUCLEOTIDE SEQUENCE [GENOMIC DNA]</scope>
    <source>
        <strain>ATCC 43587 / DSM 3638 / JCM 8422 / Vc1</strain>
    </source>
</reference>
<reference key="2">
    <citation type="journal article" date="1999" name="Genetics">
        <title>Divergence of the hyperthermophilic archaea Pyrococcus furiosus and P. horikoshii inferred from complete genomic sequences.</title>
        <authorList>
            <person name="Maeder D.L."/>
            <person name="Weiss R.B."/>
            <person name="Dunn D.M."/>
            <person name="Cherry J.L."/>
            <person name="Gonzalez J.M."/>
            <person name="DiRuggiero J."/>
            <person name="Robb F.T."/>
        </authorList>
    </citation>
    <scope>NUCLEOTIDE SEQUENCE [LARGE SCALE GENOMIC DNA]</scope>
    <source>
        <strain>ATCC 43587 / DSM 3638 / JCM 8422 / Vc1</strain>
    </source>
</reference>
<feature type="chain" id="PRO_0000057622" description="Hydroxymethylglutaryl-CoA synthase">
    <location>
        <begin position="1"/>
        <end position="350"/>
    </location>
</feature>
<feature type="active site" description="Proton donor/acceptor" evidence="1">
    <location>
        <position position="83"/>
    </location>
</feature>
<feature type="active site" description="Acyl-thioester intermediate" evidence="1">
    <location>
        <position position="115"/>
    </location>
</feature>
<feature type="active site" description="Proton donor/acceptor" evidence="1">
    <location>
        <position position="239"/>
    </location>
</feature>
<feature type="binding site" evidence="1">
    <location>
        <position position="115"/>
    </location>
    <ligand>
        <name>(3S)-3-hydroxy-3-methylglutaryl-CoA</name>
        <dbReference type="ChEBI" id="CHEBI:43074"/>
    </ligand>
</feature>
<feature type="binding site" evidence="1">
    <location>
        <position position="156"/>
    </location>
    <ligand>
        <name>(3S)-3-hydroxy-3-methylglutaryl-CoA</name>
        <dbReference type="ChEBI" id="CHEBI:43074"/>
    </ligand>
</feature>
<feature type="binding site" evidence="1">
    <location>
        <position position="204"/>
    </location>
    <ligand>
        <name>CoA</name>
        <dbReference type="ChEBI" id="CHEBI:57287"/>
        <note>ligand shared with acetoacetyl-CoA thiolase</note>
    </ligand>
</feature>
<feature type="binding site" evidence="1">
    <location>
        <position position="206"/>
    </location>
    <ligand>
        <name>(3S)-3-hydroxy-3-methylglutaryl-CoA</name>
        <dbReference type="ChEBI" id="CHEBI:43074"/>
    </ligand>
</feature>
<feature type="binding site" evidence="1">
    <location>
        <position position="239"/>
    </location>
    <ligand>
        <name>(3S)-3-hydroxy-3-methylglutaryl-CoA</name>
        <dbReference type="ChEBI" id="CHEBI:43074"/>
    </ligand>
</feature>
<feature type="binding site" evidence="1">
    <location>
        <position position="244"/>
    </location>
    <ligand>
        <name>CoA</name>
        <dbReference type="ChEBI" id="CHEBI:57287"/>
        <note>ligand shared with acetoacetyl-CoA thiolase</note>
    </ligand>
</feature>
<feature type="binding site" evidence="1">
    <location>
        <position position="271"/>
    </location>
    <ligand>
        <name>(3S)-3-hydroxy-3-methylglutaryl-CoA</name>
        <dbReference type="ChEBI" id="CHEBI:43074"/>
    </ligand>
</feature>
<feature type="binding site" evidence="1">
    <location>
        <position position="301"/>
    </location>
    <ligand>
        <name>(3S)-3-hydroxy-3-methylglutaryl-CoA</name>
        <dbReference type="ChEBI" id="CHEBI:43074"/>
    </ligand>
</feature>
<dbReference type="EC" id="2.3.3.10" evidence="1"/>
<dbReference type="EMBL" id="X85250">
    <property type="protein sequence ID" value="CAA59499.1"/>
    <property type="molecule type" value="Genomic_DNA"/>
</dbReference>
<dbReference type="EMBL" id="AE009950">
    <property type="protein sequence ID" value="AAL81096.1"/>
    <property type="molecule type" value="Genomic_DNA"/>
</dbReference>
<dbReference type="PIR" id="T45082">
    <property type="entry name" value="T45082"/>
</dbReference>
<dbReference type="RefSeq" id="WP_011012109.1">
    <property type="nucleotide sequence ID" value="NZ_CP023154.1"/>
</dbReference>
<dbReference type="SMR" id="Q51798"/>
<dbReference type="STRING" id="186497.PF0972"/>
<dbReference type="PaxDb" id="186497-PF0972"/>
<dbReference type="KEGG" id="pfu:PF0972"/>
<dbReference type="PATRIC" id="fig|186497.12.peg.1031"/>
<dbReference type="eggNOG" id="arCOG01767">
    <property type="taxonomic scope" value="Archaea"/>
</dbReference>
<dbReference type="HOGENOM" id="CLU_039592_7_0_2"/>
<dbReference type="OrthoDB" id="5812at2157"/>
<dbReference type="PhylomeDB" id="Q51798"/>
<dbReference type="UniPathway" id="UPA00058">
    <property type="reaction ID" value="UER00102"/>
</dbReference>
<dbReference type="Proteomes" id="UP000001013">
    <property type="component" value="Chromosome"/>
</dbReference>
<dbReference type="GO" id="GO:0003985">
    <property type="term" value="F:acetyl-CoA C-acetyltransferase activity"/>
    <property type="evidence" value="ECO:0007669"/>
    <property type="project" value="UniProtKB-UniRule"/>
</dbReference>
<dbReference type="GO" id="GO:0004421">
    <property type="term" value="F:hydroxymethylglutaryl-CoA synthase activity"/>
    <property type="evidence" value="ECO:0007669"/>
    <property type="project" value="InterPro"/>
</dbReference>
<dbReference type="GO" id="GO:0010142">
    <property type="term" value="P:farnesyl diphosphate biosynthetic process, mevalonate pathway"/>
    <property type="evidence" value="ECO:0007669"/>
    <property type="project" value="TreeGrafter"/>
</dbReference>
<dbReference type="GO" id="GO:0019287">
    <property type="term" value="P:isopentenyl diphosphate biosynthetic process, mevalonate pathway"/>
    <property type="evidence" value="ECO:0007669"/>
    <property type="project" value="UniProtKB-UniRule"/>
</dbReference>
<dbReference type="CDD" id="cd00827">
    <property type="entry name" value="init_cond_enzymes"/>
    <property type="match status" value="1"/>
</dbReference>
<dbReference type="FunFam" id="3.40.47.10:FF:000046">
    <property type="entry name" value="UPF0219 protein M1627_1703"/>
    <property type="match status" value="1"/>
</dbReference>
<dbReference type="Gene3D" id="3.40.47.10">
    <property type="match status" value="1"/>
</dbReference>
<dbReference type="HAMAP" id="MF_01409">
    <property type="entry name" value="HMG_CoA_synth_arch"/>
    <property type="match status" value="1"/>
</dbReference>
<dbReference type="InterPro" id="IPR013747">
    <property type="entry name" value="ACP_syn_III_C"/>
</dbReference>
<dbReference type="InterPro" id="IPR004656">
    <property type="entry name" value="HMG_CoA_Synthase"/>
</dbReference>
<dbReference type="InterPro" id="IPR016039">
    <property type="entry name" value="Thiolase-like"/>
</dbReference>
<dbReference type="NCBIfam" id="TIGR00748">
    <property type="entry name" value="HMG_CoA_syn_Arc"/>
    <property type="match status" value="1"/>
</dbReference>
<dbReference type="NCBIfam" id="NF003274">
    <property type="entry name" value="PRK04262.1"/>
    <property type="match status" value="1"/>
</dbReference>
<dbReference type="PANTHER" id="PTHR43323">
    <property type="entry name" value="3-HYDROXY-3-METHYLGLUTARYL COENZYME A SYNTHASE"/>
    <property type="match status" value="1"/>
</dbReference>
<dbReference type="PANTHER" id="PTHR43323:SF2">
    <property type="entry name" value="HYDROXYMETHYLGLUTARYL-COA SYNTHASE"/>
    <property type="match status" value="1"/>
</dbReference>
<dbReference type="Pfam" id="PF08541">
    <property type="entry name" value="ACP_syn_III_C"/>
    <property type="match status" value="1"/>
</dbReference>
<dbReference type="SUPFAM" id="SSF53901">
    <property type="entry name" value="Thiolase-like"/>
    <property type="match status" value="1"/>
</dbReference>